<organism>
    <name type="scientific">Burkholderia orbicola (strain AU 1054)</name>
    <dbReference type="NCBI Taxonomy" id="331271"/>
    <lineage>
        <taxon>Bacteria</taxon>
        <taxon>Pseudomonadati</taxon>
        <taxon>Pseudomonadota</taxon>
        <taxon>Betaproteobacteria</taxon>
        <taxon>Burkholderiales</taxon>
        <taxon>Burkholderiaceae</taxon>
        <taxon>Burkholderia</taxon>
        <taxon>Burkholderia cepacia complex</taxon>
        <taxon>Burkholderia orbicola</taxon>
    </lineage>
</organism>
<sequence>MDHIRNFSIIAHIDHGKSTLADRIIQVCGGLADREMEAQVLDSMDIERERGITIKAQTAALSYRARDGKVYNLNLIDTPGHVDFSYEVSRSLSACEGALLVVDASQGVEAQTVANCYTAIELGVEVVPVLNKIDLPAANPENAIEEIEDVIGIDATDATRCSAKTGLGVEDVLESLIAKVPPPKGDPAAPLQALIIDSWFDNYVGVVMLVRIVNGTLRPKDKIKMMATGAQYPVEHVGVFTPKSRNLDSLSAGQVGFIIAGIKELTAAKVGDTVTHAAKAAAEPLPGFKEVKPQVFAGLYPVEANQYDALRESLEKLKLNDASLQYEPEVSQALGFGFRCGFLGLLHMEIVQERLEREFDMDLITTAPTVVYEVVQSDGSTIMVENPAKMPEPGRIAEVREPIVTVNLYMPQDYVGSVITLCEQKRGSQINMQYHGRQVQLTYEIPMAEIVLDFFDRLKSVSRGYASMDYEFKEYRSSDVVKVDMLINGDKVDALSIIVHRSQSQYRGREVAAKMREIIPRQMYDVAIQAAIGAHIVARENIKALRKNVLAKCYGGDITRKKKLLEKQKEGKKRMKQVGSVEIPQEAFLAILRVEDK</sequence>
<reference key="1">
    <citation type="submission" date="2006-05" db="EMBL/GenBank/DDBJ databases">
        <title>Complete sequence of chromosome 1 of Burkholderia cenocepacia AU 1054.</title>
        <authorList>
            <consortium name="US DOE Joint Genome Institute"/>
            <person name="Copeland A."/>
            <person name="Lucas S."/>
            <person name="Lapidus A."/>
            <person name="Barry K."/>
            <person name="Detter J.C."/>
            <person name="Glavina del Rio T."/>
            <person name="Hammon N."/>
            <person name="Israni S."/>
            <person name="Dalin E."/>
            <person name="Tice H."/>
            <person name="Pitluck S."/>
            <person name="Chain P."/>
            <person name="Malfatti S."/>
            <person name="Shin M."/>
            <person name="Vergez L."/>
            <person name="Schmutz J."/>
            <person name="Larimer F."/>
            <person name="Land M."/>
            <person name="Hauser L."/>
            <person name="Kyrpides N."/>
            <person name="Lykidis A."/>
            <person name="LiPuma J.J."/>
            <person name="Konstantinidis K."/>
            <person name="Tiedje J.M."/>
            <person name="Richardson P."/>
        </authorList>
    </citation>
    <scope>NUCLEOTIDE SEQUENCE [LARGE SCALE GENOMIC DNA]</scope>
    <source>
        <strain>AU 1054</strain>
    </source>
</reference>
<keyword id="KW-0997">Cell inner membrane</keyword>
<keyword id="KW-1003">Cell membrane</keyword>
<keyword id="KW-0342">GTP-binding</keyword>
<keyword id="KW-0378">Hydrolase</keyword>
<keyword id="KW-0472">Membrane</keyword>
<keyword id="KW-0547">Nucleotide-binding</keyword>
<keyword id="KW-0648">Protein biosynthesis</keyword>
<name>LEPA_BURO1</name>
<accession>Q1BXU3</accession>
<evidence type="ECO:0000255" key="1">
    <source>
        <dbReference type="HAMAP-Rule" id="MF_00071"/>
    </source>
</evidence>
<feature type="chain" id="PRO_0000265643" description="Elongation factor 4">
    <location>
        <begin position="1"/>
        <end position="597"/>
    </location>
</feature>
<feature type="domain" description="tr-type G">
    <location>
        <begin position="2"/>
        <end position="184"/>
    </location>
</feature>
<feature type="binding site" evidence="1">
    <location>
        <begin position="14"/>
        <end position="19"/>
    </location>
    <ligand>
        <name>GTP</name>
        <dbReference type="ChEBI" id="CHEBI:37565"/>
    </ligand>
</feature>
<feature type="binding site" evidence="1">
    <location>
        <begin position="131"/>
        <end position="134"/>
    </location>
    <ligand>
        <name>GTP</name>
        <dbReference type="ChEBI" id="CHEBI:37565"/>
    </ligand>
</feature>
<dbReference type="EC" id="3.6.5.n1" evidence="1"/>
<dbReference type="EMBL" id="CP000378">
    <property type="protein sequence ID" value="ABF75562.1"/>
    <property type="molecule type" value="Genomic_DNA"/>
</dbReference>
<dbReference type="SMR" id="Q1BXU3"/>
<dbReference type="HOGENOM" id="CLU_009995_3_3_4"/>
<dbReference type="GO" id="GO:0005886">
    <property type="term" value="C:plasma membrane"/>
    <property type="evidence" value="ECO:0007669"/>
    <property type="project" value="UniProtKB-SubCell"/>
</dbReference>
<dbReference type="GO" id="GO:0005525">
    <property type="term" value="F:GTP binding"/>
    <property type="evidence" value="ECO:0007669"/>
    <property type="project" value="UniProtKB-UniRule"/>
</dbReference>
<dbReference type="GO" id="GO:0003924">
    <property type="term" value="F:GTPase activity"/>
    <property type="evidence" value="ECO:0007669"/>
    <property type="project" value="UniProtKB-UniRule"/>
</dbReference>
<dbReference type="GO" id="GO:0097216">
    <property type="term" value="F:guanosine tetraphosphate binding"/>
    <property type="evidence" value="ECO:0007669"/>
    <property type="project" value="UniProtKB-ARBA"/>
</dbReference>
<dbReference type="GO" id="GO:0043022">
    <property type="term" value="F:ribosome binding"/>
    <property type="evidence" value="ECO:0007669"/>
    <property type="project" value="UniProtKB-UniRule"/>
</dbReference>
<dbReference type="GO" id="GO:0003746">
    <property type="term" value="F:translation elongation factor activity"/>
    <property type="evidence" value="ECO:0007669"/>
    <property type="project" value="UniProtKB-UniRule"/>
</dbReference>
<dbReference type="GO" id="GO:0045727">
    <property type="term" value="P:positive regulation of translation"/>
    <property type="evidence" value="ECO:0007669"/>
    <property type="project" value="UniProtKB-UniRule"/>
</dbReference>
<dbReference type="CDD" id="cd03699">
    <property type="entry name" value="EF4_II"/>
    <property type="match status" value="1"/>
</dbReference>
<dbReference type="CDD" id="cd16260">
    <property type="entry name" value="EF4_III"/>
    <property type="match status" value="1"/>
</dbReference>
<dbReference type="CDD" id="cd01890">
    <property type="entry name" value="LepA"/>
    <property type="match status" value="1"/>
</dbReference>
<dbReference type="CDD" id="cd03709">
    <property type="entry name" value="lepA_C"/>
    <property type="match status" value="1"/>
</dbReference>
<dbReference type="FunFam" id="3.40.50.300:FF:000078">
    <property type="entry name" value="Elongation factor 4"/>
    <property type="match status" value="1"/>
</dbReference>
<dbReference type="FunFam" id="2.40.30.10:FF:000015">
    <property type="entry name" value="Translation factor GUF1, mitochondrial"/>
    <property type="match status" value="1"/>
</dbReference>
<dbReference type="FunFam" id="3.30.70.240:FF:000007">
    <property type="entry name" value="Translation factor GUF1, mitochondrial"/>
    <property type="match status" value="1"/>
</dbReference>
<dbReference type="FunFam" id="3.30.70.2570:FF:000001">
    <property type="entry name" value="Translation factor GUF1, mitochondrial"/>
    <property type="match status" value="1"/>
</dbReference>
<dbReference type="FunFam" id="3.30.70.870:FF:000004">
    <property type="entry name" value="Translation factor GUF1, mitochondrial"/>
    <property type="match status" value="1"/>
</dbReference>
<dbReference type="Gene3D" id="3.30.70.240">
    <property type="match status" value="1"/>
</dbReference>
<dbReference type="Gene3D" id="3.30.70.2570">
    <property type="entry name" value="Elongation factor 4, C-terminal domain"/>
    <property type="match status" value="1"/>
</dbReference>
<dbReference type="Gene3D" id="3.30.70.870">
    <property type="entry name" value="Elongation Factor G (Translational Gtpase), domain 3"/>
    <property type="match status" value="1"/>
</dbReference>
<dbReference type="Gene3D" id="3.40.50.300">
    <property type="entry name" value="P-loop containing nucleotide triphosphate hydrolases"/>
    <property type="match status" value="1"/>
</dbReference>
<dbReference type="Gene3D" id="2.40.30.10">
    <property type="entry name" value="Translation factors"/>
    <property type="match status" value="1"/>
</dbReference>
<dbReference type="HAMAP" id="MF_00071">
    <property type="entry name" value="LepA"/>
    <property type="match status" value="1"/>
</dbReference>
<dbReference type="InterPro" id="IPR006297">
    <property type="entry name" value="EF-4"/>
</dbReference>
<dbReference type="InterPro" id="IPR035647">
    <property type="entry name" value="EFG_III/V"/>
</dbReference>
<dbReference type="InterPro" id="IPR000640">
    <property type="entry name" value="EFG_V-like"/>
</dbReference>
<dbReference type="InterPro" id="IPR004161">
    <property type="entry name" value="EFTu-like_2"/>
</dbReference>
<dbReference type="InterPro" id="IPR031157">
    <property type="entry name" value="G_TR_CS"/>
</dbReference>
<dbReference type="InterPro" id="IPR038363">
    <property type="entry name" value="LepA_C_sf"/>
</dbReference>
<dbReference type="InterPro" id="IPR013842">
    <property type="entry name" value="LepA_CTD"/>
</dbReference>
<dbReference type="InterPro" id="IPR035654">
    <property type="entry name" value="LepA_IV"/>
</dbReference>
<dbReference type="InterPro" id="IPR027417">
    <property type="entry name" value="P-loop_NTPase"/>
</dbReference>
<dbReference type="InterPro" id="IPR005225">
    <property type="entry name" value="Small_GTP-bd"/>
</dbReference>
<dbReference type="InterPro" id="IPR000795">
    <property type="entry name" value="T_Tr_GTP-bd_dom"/>
</dbReference>
<dbReference type="InterPro" id="IPR009000">
    <property type="entry name" value="Transl_B-barrel_sf"/>
</dbReference>
<dbReference type="NCBIfam" id="TIGR01393">
    <property type="entry name" value="lepA"/>
    <property type="match status" value="1"/>
</dbReference>
<dbReference type="NCBIfam" id="TIGR00231">
    <property type="entry name" value="small_GTP"/>
    <property type="match status" value="1"/>
</dbReference>
<dbReference type="PANTHER" id="PTHR43512:SF4">
    <property type="entry name" value="TRANSLATION FACTOR GUF1 HOMOLOG, CHLOROPLASTIC"/>
    <property type="match status" value="1"/>
</dbReference>
<dbReference type="PANTHER" id="PTHR43512">
    <property type="entry name" value="TRANSLATION FACTOR GUF1-RELATED"/>
    <property type="match status" value="1"/>
</dbReference>
<dbReference type="Pfam" id="PF00679">
    <property type="entry name" value="EFG_C"/>
    <property type="match status" value="1"/>
</dbReference>
<dbReference type="Pfam" id="PF00009">
    <property type="entry name" value="GTP_EFTU"/>
    <property type="match status" value="1"/>
</dbReference>
<dbReference type="Pfam" id="PF03144">
    <property type="entry name" value="GTP_EFTU_D2"/>
    <property type="match status" value="1"/>
</dbReference>
<dbReference type="Pfam" id="PF06421">
    <property type="entry name" value="LepA_C"/>
    <property type="match status" value="1"/>
</dbReference>
<dbReference type="PRINTS" id="PR00315">
    <property type="entry name" value="ELONGATNFCT"/>
</dbReference>
<dbReference type="SMART" id="SM00838">
    <property type="entry name" value="EFG_C"/>
    <property type="match status" value="1"/>
</dbReference>
<dbReference type="SUPFAM" id="SSF54980">
    <property type="entry name" value="EF-G C-terminal domain-like"/>
    <property type="match status" value="2"/>
</dbReference>
<dbReference type="SUPFAM" id="SSF52540">
    <property type="entry name" value="P-loop containing nucleoside triphosphate hydrolases"/>
    <property type="match status" value="1"/>
</dbReference>
<dbReference type="SUPFAM" id="SSF50447">
    <property type="entry name" value="Translation proteins"/>
    <property type="match status" value="1"/>
</dbReference>
<dbReference type="PROSITE" id="PS00301">
    <property type="entry name" value="G_TR_1"/>
    <property type="match status" value="1"/>
</dbReference>
<dbReference type="PROSITE" id="PS51722">
    <property type="entry name" value="G_TR_2"/>
    <property type="match status" value="1"/>
</dbReference>
<gene>
    <name evidence="1" type="primary">lepA</name>
    <name type="ordered locus">Bcen_0652</name>
</gene>
<proteinExistence type="inferred from homology"/>
<comment type="function">
    <text evidence="1">Required for accurate and efficient protein synthesis under certain stress conditions. May act as a fidelity factor of the translation reaction, by catalyzing a one-codon backward translocation of tRNAs on improperly translocated ribosomes. Back-translocation proceeds from a post-translocation (POST) complex to a pre-translocation (PRE) complex, thus giving elongation factor G a second chance to translocate the tRNAs correctly. Binds to ribosomes in a GTP-dependent manner.</text>
</comment>
<comment type="catalytic activity">
    <reaction evidence="1">
        <text>GTP + H2O = GDP + phosphate + H(+)</text>
        <dbReference type="Rhea" id="RHEA:19669"/>
        <dbReference type="ChEBI" id="CHEBI:15377"/>
        <dbReference type="ChEBI" id="CHEBI:15378"/>
        <dbReference type="ChEBI" id="CHEBI:37565"/>
        <dbReference type="ChEBI" id="CHEBI:43474"/>
        <dbReference type="ChEBI" id="CHEBI:58189"/>
        <dbReference type="EC" id="3.6.5.n1"/>
    </reaction>
</comment>
<comment type="subcellular location">
    <subcellularLocation>
        <location evidence="1">Cell inner membrane</location>
        <topology evidence="1">Peripheral membrane protein</topology>
        <orientation evidence="1">Cytoplasmic side</orientation>
    </subcellularLocation>
</comment>
<comment type="similarity">
    <text evidence="1">Belongs to the TRAFAC class translation factor GTPase superfamily. Classic translation factor GTPase family. LepA subfamily.</text>
</comment>
<protein>
    <recommendedName>
        <fullName evidence="1">Elongation factor 4</fullName>
        <shortName evidence="1">EF-4</shortName>
        <ecNumber evidence="1">3.6.5.n1</ecNumber>
    </recommendedName>
    <alternativeName>
        <fullName evidence="1">Ribosomal back-translocase LepA</fullName>
    </alternativeName>
</protein>